<comment type="function">
    <text evidence="3">Chromatin-associated factor that regulates transcription (PubMed:29065309). Regulates Pol I-mediated rRNA biogenesis and, probably, Pol III-mediated transcription (PubMed:29065309). Regulates the epigenetic status of rDNA (PubMed:29065309).</text>
</comment>
<comment type="subunit">
    <text evidence="3">Associates with the RNA polymerase (Pol I) complex (PubMed:29065309). Interacts with POLR1E (PubMed:29065309).</text>
</comment>
<comment type="subcellular location">
    <subcellularLocation>
        <location evidence="4">Nucleus</location>
    </subcellularLocation>
    <subcellularLocation>
        <location evidence="3">Nucleus</location>
        <location evidence="3">Nucleolus</location>
    </subcellularLocation>
    <subcellularLocation>
        <location evidence="3">Chromosome</location>
    </subcellularLocation>
    <text evidence="3">Associates with chromatin regions of rDNA.</text>
</comment>
<comment type="alternative products">
    <event type="alternative splicing"/>
    <isoform>
        <id>Q13610-1</id>
        <name>1</name>
        <sequence type="displayed"/>
    </isoform>
    <isoform>
        <id>Q13610-2</id>
        <name>2</name>
        <sequence type="described" ref="VSP_056168 VSP_056169"/>
    </isoform>
</comment>
<comment type="tissue specificity">
    <text>High levels seen in the placenta, skeletal muscle, kidney and pancreas while lower levels were seen in the heart, brain and lung.</text>
</comment>
<comment type="similarity">
    <text evidence="6">Belongs to the WD repeat PWP1 family.</text>
</comment>
<sequence>MNRSRQVTCVAWVRCGVAKETPDKVELSKEEVKRLIAEAKEKLQEEGGGSDEEETGSPSEDGMQSARTQARPREPLEDGDPEDDRTLDDDELAEYDLDKYDEEGDPDAETLGESLLGLTVYGSNDQDPYVTLKDTEQYEREDFLIKPSDNLIVCGRAEQDQCNLEVHVYNQEEDSFYVHHDILLSAYPLSVEWLNFDPSPDDSTGNYIAVGNMTPVIEVWDLDIVDSLEPVFTLGSKLSKKKKKKGKKSSSAEGHTDAVLDLSWNKLIRNVLASASADNTVILWDMSLGKPAASLAVHTDKVQTLQFHPFEAQTLISGSYDKSVALYDCRSPDESHRMWRFSGQIERVTWNHFSPCHFLASTDDGFVYNLDARSDKPIFTLNAHNDEISGLDLSSQIKGCLVTASADKYVKIWDILGDRPSLVHSRDMKMGVLFCSSCCPDLPFIYAFGGQKEGLRVWDISTVSSVNEAFGRRERLVLGSARNSSISGPFGSRSSDTPMES</sequence>
<reference key="1">
    <citation type="journal article" date="1994" name="Gene">
        <title>Cloning of a cDNA encoding a novel human nuclear phosphoprotein belonging to the WD-40 family.</title>
        <authorList>
            <person name="Honore B."/>
            <person name="Leffers H."/>
            <person name="Madsen P."/>
            <person name="Celis J.E."/>
        </authorList>
    </citation>
    <scope>NUCLEOTIDE SEQUENCE [MRNA] (ISOFORM 1)</scope>
    <scope>SUBCELLULAR LOCATION</scope>
</reference>
<reference key="2">
    <citation type="journal article" date="2004" name="Nat. Genet.">
        <title>Complete sequencing and characterization of 21,243 full-length human cDNAs.</title>
        <authorList>
            <person name="Ota T."/>
            <person name="Suzuki Y."/>
            <person name="Nishikawa T."/>
            <person name="Otsuki T."/>
            <person name="Sugiyama T."/>
            <person name="Irie R."/>
            <person name="Wakamatsu A."/>
            <person name="Hayashi K."/>
            <person name="Sato H."/>
            <person name="Nagai K."/>
            <person name="Kimura K."/>
            <person name="Makita H."/>
            <person name="Sekine M."/>
            <person name="Obayashi M."/>
            <person name="Nishi T."/>
            <person name="Shibahara T."/>
            <person name="Tanaka T."/>
            <person name="Ishii S."/>
            <person name="Yamamoto J."/>
            <person name="Saito K."/>
            <person name="Kawai Y."/>
            <person name="Isono Y."/>
            <person name="Nakamura Y."/>
            <person name="Nagahari K."/>
            <person name="Murakami K."/>
            <person name="Yasuda T."/>
            <person name="Iwayanagi T."/>
            <person name="Wagatsuma M."/>
            <person name="Shiratori A."/>
            <person name="Sudo H."/>
            <person name="Hosoiri T."/>
            <person name="Kaku Y."/>
            <person name="Kodaira H."/>
            <person name="Kondo H."/>
            <person name="Sugawara M."/>
            <person name="Takahashi M."/>
            <person name="Kanda K."/>
            <person name="Yokoi T."/>
            <person name="Furuya T."/>
            <person name="Kikkawa E."/>
            <person name="Omura Y."/>
            <person name="Abe K."/>
            <person name="Kamihara K."/>
            <person name="Katsuta N."/>
            <person name="Sato K."/>
            <person name="Tanikawa M."/>
            <person name="Yamazaki M."/>
            <person name="Ninomiya K."/>
            <person name="Ishibashi T."/>
            <person name="Yamashita H."/>
            <person name="Murakawa K."/>
            <person name="Fujimori K."/>
            <person name="Tanai H."/>
            <person name="Kimata M."/>
            <person name="Watanabe M."/>
            <person name="Hiraoka S."/>
            <person name="Chiba Y."/>
            <person name="Ishida S."/>
            <person name="Ono Y."/>
            <person name="Takiguchi S."/>
            <person name="Watanabe S."/>
            <person name="Yosida M."/>
            <person name="Hotuta T."/>
            <person name="Kusano J."/>
            <person name="Kanehori K."/>
            <person name="Takahashi-Fujii A."/>
            <person name="Hara H."/>
            <person name="Tanase T.-O."/>
            <person name="Nomura Y."/>
            <person name="Togiya S."/>
            <person name="Komai F."/>
            <person name="Hara R."/>
            <person name="Takeuchi K."/>
            <person name="Arita M."/>
            <person name="Imose N."/>
            <person name="Musashino K."/>
            <person name="Yuuki H."/>
            <person name="Oshima A."/>
            <person name="Sasaki N."/>
            <person name="Aotsuka S."/>
            <person name="Yoshikawa Y."/>
            <person name="Matsunawa H."/>
            <person name="Ichihara T."/>
            <person name="Shiohata N."/>
            <person name="Sano S."/>
            <person name="Moriya S."/>
            <person name="Momiyama H."/>
            <person name="Satoh N."/>
            <person name="Takami S."/>
            <person name="Terashima Y."/>
            <person name="Suzuki O."/>
            <person name="Nakagawa S."/>
            <person name="Senoh A."/>
            <person name="Mizoguchi H."/>
            <person name="Goto Y."/>
            <person name="Shimizu F."/>
            <person name="Wakebe H."/>
            <person name="Hishigaki H."/>
            <person name="Watanabe T."/>
            <person name="Sugiyama A."/>
            <person name="Takemoto M."/>
            <person name="Kawakami B."/>
            <person name="Yamazaki M."/>
            <person name="Watanabe K."/>
            <person name="Kumagai A."/>
            <person name="Itakura S."/>
            <person name="Fukuzumi Y."/>
            <person name="Fujimori Y."/>
            <person name="Komiyama M."/>
            <person name="Tashiro H."/>
            <person name="Tanigami A."/>
            <person name="Fujiwara T."/>
            <person name="Ono T."/>
            <person name="Yamada K."/>
            <person name="Fujii Y."/>
            <person name="Ozaki K."/>
            <person name="Hirao M."/>
            <person name="Ohmori Y."/>
            <person name="Kawabata A."/>
            <person name="Hikiji T."/>
            <person name="Kobatake N."/>
            <person name="Inagaki H."/>
            <person name="Ikema Y."/>
            <person name="Okamoto S."/>
            <person name="Okitani R."/>
            <person name="Kawakami T."/>
            <person name="Noguchi S."/>
            <person name="Itoh T."/>
            <person name="Shigeta K."/>
            <person name="Senba T."/>
            <person name="Matsumura K."/>
            <person name="Nakajima Y."/>
            <person name="Mizuno T."/>
            <person name="Morinaga M."/>
            <person name="Sasaki M."/>
            <person name="Togashi T."/>
            <person name="Oyama M."/>
            <person name="Hata H."/>
            <person name="Watanabe M."/>
            <person name="Komatsu T."/>
            <person name="Mizushima-Sugano J."/>
            <person name="Satoh T."/>
            <person name="Shirai Y."/>
            <person name="Takahashi Y."/>
            <person name="Nakagawa K."/>
            <person name="Okumura K."/>
            <person name="Nagase T."/>
            <person name="Nomura N."/>
            <person name="Kikuchi H."/>
            <person name="Masuho Y."/>
            <person name="Yamashita R."/>
            <person name="Nakai K."/>
            <person name="Yada T."/>
            <person name="Nakamura Y."/>
            <person name="Ohara O."/>
            <person name="Isogai T."/>
            <person name="Sugano S."/>
        </authorList>
    </citation>
    <scope>NUCLEOTIDE SEQUENCE [LARGE SCALE MRNA] (ISOFORM 1)</scope>
</reference>
<reference key="3">
    <citation type="journal article" date="2006" name="Nature">
        <title>The finished DNA sequence of human chromosome 12.</title>
        <authorList>
            <person name="Scherer S.E."/>
            <person name="Muzny D.M."/>
            <person name="Buhay C.J."/>
            <person name="Chen R."/>
            <person name="Cree A."/>
            <person name="Ding Y."/>
            <person name="Dugan-Rocha S."/>
            <person name="Gill R."/>
            <person name="Gunaratne P."/>
            <person name="Harris R.A."/>
            <person name="Hawes A.C."/>
            <person name="Hernandez J."/>
            <person name="Hodgson A.V."/>
            <person name="Hume J."/>
            <person name="Jackson A."/>
            <person name="Khan Z.M."/>
            <person name="Kovar-Smith C."/>
            <person name="Lewis L.R."/>
            <person name="Lozado R.J."/>
            <person name="Metzker M.L."/>
            <person name="Milosavljevic A."/>
            <person name="Miner G.R."/>
            <person name="Montgomery K.T."/>
            <person name="Morgan M.B."/>
            <person name="Nazareth L.V."/>
            <person name="Scott G."/>
            <person name="Sodergren E."/>
            <person name="Song X.-Z."/>
            <person name="Steffen D."/>
            <person name="Lovering R.C."/>
            <person name="Wheeler D.A."/>
            <person name="Worley K.C."/>
            <person name="Yuan Y."/>
            <person name="Zhang Z."/>
            <person name="Adams C.Q."/>
            <person name="Ansari-Lari M.A."/>
            <person name="Ayele M."/>
            <person name="Brown M.J."/>
            <person name="Chen G."/>
            <person name="Chen Z."/>
            <person name="Clerc-Blankenburg K.P."/>
            <person name="Davis C."/>
            <person name="Delgado O."/>
            <person name="Dinh H.H."/>
            <person name="Draper H."/>
            <person name="Gonzalez-Garay M.L."/>
            <person name="Havlak P."/>
            <person name="Jackson L.R."/>
            <person name="Jacob L.S."/>
            <person name="Kelly S.H."/>
            <person name="Li L."/>
            <person name="Li Z."/>
            <person name="Liu J."/>
            <person name="Liu W."/>
            <person name="Lu J."/>
            <person name="Maheshwari M."/>
            <person name="Nguyen B.-V."/>
            <person name="Okwuonu G.O."/>
            <person name="Pasternak S."/>
            <person name="Perez L.M."/>
            <person name="Plopper F.J.H."/>
            <person name="Santibanez J."/>
            <person name="Shen H."/>
            <person name="Tabor P.E."/>
            <person name="Verduzco D."/>
            <person name="Waldron L."/>
            <person name="Wang Q."/>
            <person name="Williams G.A."/>
            <person name="Zhang J."/>
            <person name="Zhou J."/>
            <person name="Allen C.C."/>
            <person name="Amin A.G."/>
            <person name="Anyalebechi V."/>
            <person name="Bailey M."/>
            <person name="Barbaria J.A."/>
            <person name="Bimage K.E."/>
            <person name="Bryant N.P."/>
            <person name="Burch P.E."/>
            <person name="Burkett C.E."/>
            <person name="Burrell K.L."/>
            <person name="Calderon E."/>
            <person name="Cardenas V."/>
            <person name="Carter K."/>
            <person name="Casias K."/>
            <person name="Cavazos I."/>
            <person name="Cavazos S.R."/>
            <person name="Ceasar H."/>
            <person name="Chacko J."/>
            <person name="Chan S.N."/>
            <person name="Chavez D."/>
            <person name="Christopoulos C."/>
            <person name="Chu J."/>
            <person name="Cockrell R."/>
            <person name="Cox C.D."/>
            <person name="Dang M."/>
            <person name="Dathorne S.R."/>
            <person name="David R."/>
            <person name="Davis C.M."/>
            <person name="Davy-Carroll L."/>
            <person name="Deshazo D.R."/>
            <person name="Donlin J.E."/>
            <person name="D'Souza L."/>
            <person name="Eaves K.A."/>
            <person name="Egan A."/>
            <person name="Emery-Cohen A.J."/>
            <person name="Escotto M."/>
            <person name="Flagg N."/>
            <person name="Forbes L.D."/>
            <person name="Gabisi A.M."/>
            <person name="Garza M."/>
            <person name="Hamilton C."/>
            <person name="Henderson N."/>
            <person name="Hernandez O."/>
            <person name="Hines S."/>
            <person name="Hogues M.E."/>
            <person name="Huang M."/>
            <person name="Idlebird D.G."/>
            <person name="Johnson R."/>
            <person name="Jolivet A."/>
            <person name="Jones S."/>
            <person name="Kagan R."/>
            <person name="King L.M."/>
            <person name="Leal B."/>
            <person name="Lebow H."/>
            <person name="Lee S."/>
            <person name="LeVan J.M."/>
            <person name="Lewis L.C."/>
            <person name="London P."/>
            <person name="Lorensuhewa L.M."/>
            <person name="Loulseged H."/>
            <person name="Lovett D.A."/>
            <person name="Lucier A."/>
            <person name="Lucier R.L."/>
            <person name="Ma J."/>
            <person name="Madu R.C."/>
            <person name="Mapua P."/>
            <person name="Martindale A.D."/>
            <person name="Martinez E."/>
            <person name="Massey E."/>
            <person name="Mawhiney S."/>
            <person name="Meador M.G."/>
            <person name="Mendez S."/>
            <person name="Mercado C."/>
            <person name="Mercado I.C."/>
            <person name="Merritt C.E."/>
            <person name="Miner Z.L."/>
            <person name="Minja E."/>
            <person name="Mitchell T."/>
            <person name="Mohabbat F."/>
            <person name="Mohabbat K."/>
            <person name="Montgomery B."/>
            <person name="Moore N."/>
            <person name="Morris S."/>
            <person name="Munidasa M."/>
            <person name="Ngo R.N."/>
            <person name="Nguyen N.B."/>
            <person name="Nickerson E."/>
            <person name="Nwaokelemeh O.O."/>
            <person name="Nwokenkwo S."/>
            <person name="Obregon M."/>
            <person name="Oguh M."/>
            <person name="Oragunye N."/>
            <person name="Oviedo R.J."/>
            <person name="Parish B.J."/>
            <person name="Parker D.N."/>
            <person name="Parrish J."/>
            <person name="Parks K.L."/>
            <person name="Paul H.A."/>
            <person name="Payton B.A."/>
            <person name="Perez A."/>
            <person name="Perrin W."/>
            <person name="Pickens A."/>
            <person name="Primus E.L."/>
            <person name="Pu L.-L."/>
            <person name="Puazo M."/>
            <person name="Quiles M.M."/>
            <person name="Quiroz J.B."/>
            <person name="Rabata D."/>
            <person name="Reeves K."/>
            <person name="Ruiz S.J."/>
            <person name="Shao H."/>
            <person name="Sisson I."/>
            <person name="Sonaike T."/>
            <person name="Sorelle R.P."/>
            <person name="Sutton A.E."/>
            <person name="Svatek A.F."/>
            <person name="Svetz L.A."/>
            <person name="Tamerisa K.S."/>
            <person name="Taylor T.R."/>
            <person name="Teague B."/>
            <person name="Thomas N."/>
            <person name="Thorn R.D."/>
            <person name="Trejos Z.Y."/>
            <person name="Trevino B.K."/>
            <person name="Ukegbu O.N."/>
            <person name="Urban J.B."/>
            <person name="Vasquez L.I."/>
            <person name="Vera V.A."/>
            <person name="Villasana D.M."/>
            <person name="Wang L."/>
            <person name="Ward-Moore S."/>
            <person name="Warren J.T."/>
            <person name="Wei X."/>
            <person name="White F."/>
            <person name="Williamson A.L."/>
            <person name="Wleczyk R."/>
            <person name="Wooden H.S."/>
            <person name="Wooden S.H."/>
            <person name="Yen J."/>
            <person name="Yoon L."/>
            <person name="Yoon V."/>
            <person name="Zorrilla S.E."/>
            <person name="Nelson D."/>
            <person name="Kucherlapati R."/>
            <person name="Weinstock G."/>
            <person name="Gibbs R.A."/>
        </authorList>
    </citation>
    <scope>NUCLEOTIDE SEQUENCE [LARGE SCALE GENOMIC DNA]</scope>
</reference>
<reference key="4">
    <citation type="submission" date="2005-07" db="EMBL/GenBank/DDBJ databases">
        <authorList>
            <person name="Mural R.J."/>
            <person name="Istrail S."/>
            <person name="Sutton G.G."/>
            <person name="Florea L."/>
            <person name="Halpern A.L."/>
            <person name="Mobarry C.M."/>
            <person name="Lippert R."/>
            <person name="Walenz B."/>
            <person name="Shatkay H."/>
            <person name="Dew I."/>
            <person name="Miller J.R."/>
            <person name="Flanigan M.J."/>
            <person name="Edwards N.J."/>
            <person name="Bolanos R."/>
            <person name="Fasulo D."/>
            <person name="Halldorsson B.V."/>
            <person name="Hannenhalli S."/>
            <person name="Turner R."/>
            <person name="Yooseph S."/>
            <person name="Lu F."/>
            <person name="Nusskern D.R."/>
            <person name="Shue B.C."/>
            <person name="Zheng X.H."/>
            <person name="Zhong F."/>
            <person name="Delcher A.L."/>
            <person name="Huson D.H."/>
            <person name="Kravitz S.A."/>
            <person name="Mouchard L."/>
            <person name="Reinert K."/>
            <person name="Remington K.A."/>
            <person name="Clark A.G."/>
            <person name="Waterman M.S."/>
            <person name="Eichler E.E."/>
            <person name="Adams M.D."/>
            <person name="Hunkapiller M.W."/>
            <person name="Myers E.W."/>
            <person name="Venter J.C."/>
        </authorList>
    </citation>
    <scope>NUCLEOTIDE SEQUENCE [LARGE SCALE GENOMIC DNA]</scope>
</reference>
<reference key="5">
    <citation type="journal article" date="2004" name="Genome Res.">
        <title>The status, quality, and expansion of the NIH full-length cDNA project: the Mammalian Gene Collection (MGC).</title>
        <authorList>
            <consortium name="The MGC Project Team"/>
        </authorList>
    </citation>
    <scope>NUCLEOTIDE SEQUENCE [LARGE SCALE MRNA] (ISOFORM 2)</scope>
    <source>
        <tissue>Skeletal muscle</tissue>
    </source>
</reference>
<reference key="6">
    <citation type="journal article" date="2006" name="Cell">
        <title>Global, in vivo, and site-specific phosphorylation dynamics in signaling networks.</title>
        <authorList>
            <person name="Olsen J.V."/>
            <person name="Blagoev B."/>
            <person name="Gnad F."/>
            <person name="Macek B."/>
            <person name="Kumar C."/>
            <person name="Mortensen P."/>
            <person name="Mann M."/>
        </authorList>
    </citation>
    <scope>PHOSPHORYLATION [LARGE SCALE ANALYSIS] AT SER-50</scope>
    <scope>IDENTIFICATION BY MASS SPECTROMETRY [LARGE SCALE ANALYSIS]</scope>
    <source>
        <tissue>Cervix carcinoma</tissue>
    </source>
</reference>
<reference key="7">
    <citation type="journal article" date="2007" name="Electrophoresis">
        <title>Toward a global characterization of the phosphoproteome in prostate cancer cells: identification of phosphoproteins in the LNCaP cell line.</title>
        <authorList>
            <person name="Giorgianni F."/>
            <person name="Zhao Y."/>
            <person name="Desiderio D.M."/>
            <person name="Beranova-Giorgianni S."/>
        </authorList>
    </citation>
    <scope>PHOSPHORYLATION [LARGE SCALE ANALYSIS] AT SER-50</scope>
    <scope>IDENTIFICATION BY MASS SPECTROMETRY [LARGE SCALE ANALYSIS]</scope>
    <source>
        <tissue>Prostate cancer</tissue>
    </source>
</reference>
<reference key="8">
    <citation type="journal article" date="2008" name="Proc. Natl. Acad. Sci. U.S.A.">
        <title>A quantitative atlas of mitotic phosphorylation.</title>
        <authorList>
            <person name="Dephoure N."/>
            <person name="Zhou C."/>
            <person name="Villen J."/>
            <person name="Beausoleil S.A."/>
            <person name="Bakalarski C.E."/>
            <person name="Elledge S.J."/>
            <person name="Gygi S.P."/>
        </authorList>
    </citation>
    <scope>PHOSPHORYLATION [LARGE SCALE ANALYSIS] AT SER-50; SER-57 AND SER-59</scope>
    <scope>IDENTIFICATION BY MASS SPECTROMETRY [LARGE SCALE ANALYSIS]</scope>
    <source>
        <tissue>Cervix carcinoma</tissue>
    </source>
</reference>
<reference key="9">
    <citation type="journal article" date="2009" name="Anal. Chem.">
        <title>Lys-N and trypsin cover complementary parts of the phosphoproteome in a refined SCX-based approach.</title>
        <authorList>
            <person name="Gauci S."/>
            <person name="Helbig A.O."/>
            <person name="Slijper M."/>
            <person name="Krijgsveld J."/>
            <person name="Heck A.J."/>
            <person name="Mohammed S."/>
        </authorList>
    </citation>
    <scope>IDENTIFICATION BY MASS SPECTROMETRY [LARGE SCALE ANALYSIS]</scope>
</reference>
<reference key="10">
    <citation type="journal article" date="2009" name="Sci. Signal.">
        <title>Quantitative phosphoproteomic analysis of T cell receptor signaling reveals system-wide modulation of protein-protein interactions.</title>
        <authorList>
            <person name="Mayya V."/>
            <person name="Lundgren D.H."/>
            <person name="Hwang S.-I."/>
            <person name="Rezaul K."/>
            <person name="Wu L."/>
            <person name="Eng J.K."/>
            <person name="Rodionov V."/>
            <person name="Han D.K."/>
        </authorList>
    </citation>
    <scope>PHOSPHORYLATION [LARGE SCALE ANALYSIS] AT SER-50; THR-55; SER-57 AND SER-59</scope>
    <scope>IDENTIFICATION BY MASS SPECTROMETRY [LARGE SCALE ANALYSIS]</scope>
    <source>
        <tissue>Leukemic T-cell</tissue>
    </source>
</reference>
<reference key="11">
    <citation type="journal article" date="2010" name="Sci. Signal.">
        <title>Quantitative phosphoproteomics reveals widespread full phosphorylation site occupancy during mitosis.</title>
        <authorList>
            <person name="Olsen J.V."/>
            <person name="Vermeulen M."/>
            <person name="Santamaria A."/>
            <person name="Kumar C."/>
            <person name="Miller M.L."/>
            <person name="Jensen L.J."/>
            <person name="Gnad F."/>
            <person name="Cox J."/>
            <person name="Jensen T.S."/>
            <person name="Nigg E.A."/>
            <person name="Brunak S."/>
            <person name="Mann M."/>
        </authorList>
    </citation>
    <scope>PHOSPHORYLATION [LARGE SCALE ANALYSIS] AT SER-50; SER-57 AND THR-86</scope>
    <scope>IDENTIFICATION BY MASS SPECTROMETRY [LARGE SCALE ANALYSIS]</scope>
    <source>
        <tissue>Cervix carcinoma</tissue>
    </source>
</reference>
<reference key="12">
    <citation type="journal article" date="2011" name="BMC Syst. Biol.">
        <title>Initial characterization of the human central proteome.</title>
        <authorList>
            <person name="Burkard T.R."/>
            <person name="Planyavsky M."/>
            <person name="Kaupe I."/>
            <person name="Breitwieser F.P."/>
            <person name="Buerckstuemmer T."/>
            <person name="Bennett K.L."/>
            <person name="Superti-Furga G."/>
            <person name="Colinge J."/>
        </authorList>
    </citation>
    <scope>IDENTIFICATION BY MASS SPECTROMETRY [LARGE SCALE ANALYSIS]</scope>
</reference>
<reference key="13">
    <citation type="journal article" date="2011" name="Sci. Signal.">
        <title>System-wide temporal characterization of the proteome and phosphoproteome of human embryonic stem cell differentiation.</title>
        <authorList>
            <person name="Rigbolt K.T."/>
            <person name="Prokhorova T.A."/>
            <person name="Akimov V."/>
            <person name="Henningsen J."/>
            <person name="Johansen P.T."/>
            <person name="Kratchmarova I."/>
            <person name="Kassem M."/>
            <person name="Mann M."/>
            <person name="Olsen J.V."/>
            <person name="Blagoev B."/>
        </authorList>
    </citation>
    <scope>PHOSPHORYLATION [LARGE SCALE ANALYSIS] AT SER-50</scope>
    <scope>IDENTIFICATION BY MASS SPECTROMETRY [LARGE SCALE ANALYSIS]</scope>
</reference>
<reference key="14">
    <citation type="journal article" date="2013" name="J. Proteome Res.">
        <title>Toward a comprehensive characterization of a human cancer cell phosphoproteome.</title>
        <authorList>
            <person name="Zhou H."/>
            <person name="Di Palma S."/>
            <person name="Preisinger C."/>
            <person name="Peng M."/>
            <person name="Polat A.N."/>
            <person name="Heck A.J."/>
            <person name="Mohammed S."/>
        </authorList>
    </citation>
    <scope>PHOSPHORYLATION [LARGE SCALE ANALYSIS] AT THR-21; SER-50; SER-57 AND SER-485</scope>
    <scope>IDENTIFICATION BY MASS SPECTROMETRY [LARGE SCALE ANALYSIS]</scope>
    <source>
        <tissue>Cervix carcinoma</tissue>
        <tissue>Erythroleukemia</tissue>
    </source>
</reference>
<reference key="15">
    <citation type="journal article" date="2014" name="J. Proteomics">
        <title>An enzyme assisted RP-RPLC approach for in-depth analysis of human liver phosphoproteome.</title>
        <authorList>
            <person name="Bian Y."/>
            <person name="Song C."/>
            <person name="Cheng K."/>
            <person name="Dong M."/>
            <person name="Wang F."/>
            <person name="Huang J."/>
            <person name="Sun D."/>
            <person name="Wang L."/>
            <person name="Ye M."/>
            <person name="Zou H."/>
        </authorList>
    </citation>
    <scope>PHOSPHORYLATION [LARGE SCALE ANALYSIS] AT SER-50</scope>
    <scope>IDENTIFICATION BY MASS SPECTROMETRY [LARGE SCALE ANALYSIS]</scope>
    <source>
        <tissue>Liver</tissue>
    </source>
</reference>
<reference key="16">
    <citation type="journal article" date="2017" name="Dev. Cell">
        <title>PWP1 Mediates Nutrient-Dependent Growth Control through Nucleolar Regulation of Ribosomal Gene Expression.</title>
        <authorList>
            <person name="Liu Y."/>
            <person name="Mattila J."/>
            <person name="Ventelae S."/>
            <person name="Yadav L."/>
            <person name="Zhang W."/>
            <person name="Lamichane N."/>
            <person name="Sundstroem J."/>
            <person name="Kauko O."/>
            <person name="Grenman R."/>
            <person name="Varjosalo M."/>
            <person name="Westermarck J."/>
            <person name="Hietakangas V."/>
        </authorList>
    </citation>
    <scope>FUNCTION</scope>
    <scope>ASSOCIATION WITH THE RNA POLYMERASE I COMPLEX</scope>
    <scope>INTERACTION WITH POLR1E</scope>
    <scope>SUBCELLULAR LOCATION</scope>
</reference>
<accession>Q13610</accession>
<accession>A8K3R6</accession>
<accession>Q7Z3X9</accession>
<organism>
    <name type="scientific">Homo sapiens</name>
    <name type="common">Human</name>
    <dbReference type="NCBI Taxonomy" id="9606"/>
    <lineage>
        <taxon>Eukaryota</taxon>
        <taxon>Metazoa</taxon>
        <taxon>Chordata</taxon>
        <taxon>Craniata</taxon>
        <taxon>Vertebrata</taxon>
        <taxon>Euteleostomi</taxon>
        <taxon>Mammalia</taxon>
        <taxon>Eutheria</taxon>
        <taxon>Euarchontoglires</taxon>
        <taxon>Primates</taxon>
        <taxon>Haplorrhini</taxon>
        <taxon>Catarrhini</taxon>
        <taxon>Hominidae</taxon>
        <taxon>Homo</taxon>
    </lineage>
</organism>
<name>PWP1_HUMAN</name>
<proteinExistence type="evidence at protein level"/>
<protein>
    <recommendedName>
        <fullName evidence="7">Periodic tryptophan protein 1 homolog</fullName>
    </recommendedName>
    <alternativeName>
        <fullName>Keratinocyte protein IEF SSP 9502</fullName>
    </alternativeName>
</protein>
<dbReference type="EMBL" id="L07758">
    <property type="protein sequence ID" value="AAA65201.1"/>
    <property type="molecule type" value="mRNA"/>
</dbReference>
<dbReference type="EMBL" id="AK290681">
    <property type="protein sequence ID" value="BAF83370.1"/>
    <property type="molecule type" value="mRNA"/>
</dbReference>
<dbReference type="EMBL" id="AC007622">
    <property type="status" value="NOT_ANNOTATED_CDS"/>
    <property type="molecule type" value="Genomic_DNA"/>
</dbReference>
<dbReference type="EMBL" id="CH471054">
    <property type="protein sequence ID" value="EAW97802.1"/>
    <property type="molecule type" value="Genomic_DNA"/>
</dbReference>
<dbReference type="EMBL" id="BC010921">
    <property type="protein sequence ID" value="AAH10921.1"/>
    <property type="molecule type" value="mRNA"/>
</dbReference>
<dbReference type="CCDS" id="CCDS9114.1">
    <molecule id="Q13610-1"/>
</dbReference>
<dbReference type="PIR" id="I39360">
    <property type="entry name" value="I39360"/>
</dbReference>
<dbReference type="RefSeq" id="NP_001304892.1">
    <property type="nucleotide sequence ID" value="NM_001317963.1"/>
</dbReference>
<dbReference type="RefSeq" id="NP_008993.1">
    <molecule id="Q13610-1"/>
    <property type="nucleotide sequence ID" value="NM_007062.3"/>
</dbReference>
<dbReference type="SMR" id="Q13610"/>
<dbReference type="BioGRID" id="116310">
    <property type="interactions" value="187"/>
</dbReference>
<dbReference type="CORUM" id="Q13610"/>
<dbReference type="FunCoup" id="Q13610">
    <property type="interactions" value="4349"/>
</dbReference>
<dbReference type="IntAct" id="Q13610">
    <property type="interactions" value="89"/>
</dbReference>
<dbReference type="MINT" id="Q13610"/>
<dbReference type="STRING" id="9606.ENSP00000387365"/>
<dbReference type="GlyGen" id="Q13610">
    <property type="glycosylation" value="1 site, 1 O-linked glycan (1 site)"/>
</dbReference>
<dbReference type="iPTMnet" id="Q13610"/>
<dbReference type="PhosphoSitePlus" id="Q13610"/>
<dbReference type="SwissPalm" id="Q13610"/>
<dbReference type="BioMuta" id="PWP1"/>
<dbReference type="DMDM" id="2494897"/>
<dbReference type="CPTAC" id="CPTAC-995"/>
<dbReference type="jPOST" id="Q13610"/>
<dbReference type="MassIVE" id="Q13610"/>
<dbReference type="PaxDb" id="9606-ENSP00000387365"/>
<dbReference type="PeptideAtlas" id="Q13610"/>
<dbReference type="ProteomicsDB" id="59597">
    <molecule id="Q13610-1"/>
</dbReference>
<dbReference type="ProteomicsDB" id="69094"/>
<dbReference type="Pumba" id="Q13610"/>
<dbReference type="Antibodypedia" id="18254">
    <property type="antibodies" value="94 antibodies from 25 providers"/>
</dbReference>
<dbReference type="DNASU" id="11137"/>
<dbReference type="Ensembl" id="ENST00000412830.8">
    <molecule id="Q13610-1"/>
    <property type="protein sequence ID" value="ENSP00000387365.3"/>
    <property type="gene ID" value="ENSG00000136045.12"/>
</dbReference>
<dbReference type="Ensembl" id="ENST00000552760.5">
    <molecule id="Q13610-2"/>
    <property type="protein sequence ID" value="ENSP00000448227.1"/>
    <property type="gene ID" value="ENSG00000136045.12"/>
</dbReference>
<dbReference type="GeneID" id="11137"/>
<dbReference type="KEGG" id="hsa:11137"/>
<dbReference type="MANE-Select" id="ENST00000412830.8">
    <property type="protein sequence ID" value="ENSP00000387365.3"/>
    <property type="RefSeq nucleotide sequence ID" value="NM_007062.3"/>
    <property type="RefSeq protein sequence ID" value="NP_008993.1"/>
</dbReference>
<dbReference type="UCSC" id="uc001tmo.2">
    <molecule id="Q13610-1"/>
    <property type="organism name" value="human"/>
</dbReference>
<dbReference type="AGR" id="HGNC:17015"/>
<dbReference type="CTD" id="11137"/>
<dbReference type="DisGeNET" id="11137"/>
<dbReference type="GeneCards" id="PWP1"/>
<dbReference type="HGNC" id="HGNC:17015">
    <property type="gene designation" value="PWP1"/>
</dbReference>
<dbReference type="HPA" id="ENSG00000136045">
    <property type="expression patterns" value="Low tissue specificity"/>
</dbReference>
<dbReference type="MIM" id="620055">
    <property type="type" value="gene"/>
</dbReference>
<dbReference type="neXtProt" id="NX_Q13610"/>
<dbReference type="OpenTargets" id="ENSG00000136045"/>
<dbReference type="PharmGKB" id="PA142671112"/>
<dbReference type="VEuPathDB" id="HostDB:ENSG00000136045"/>
<dbReference type="eggNOG" id="KOG0270">
    <property type="taxonomic scope" value="Eukaryota"/>
</dbReference>
<dbReference type="GeneTree" id="ENSGT00390000017324"/>
<dbReference type="HOGENOM" id="CLU_1767446_0_0_1"/>
<dbReference type="InParanoid" id="Q13610"/>
<dbReference type="OMA" id="CFVPRGV"/>
<dbReference type="OrthoDB" id="270624at2759"/>
<dbReference type="PAN-GO" id="Q13610">
    <property type="GO annotations" value="1 GO annotation based on evolutionary models"/>
</dbReference>
<dbReference type="PhylomeDB" id="Q13610"/>
<dbReference type="TreeFam" id="TF314868"/>
<dbReference type="PathwayCommons" id="Q13610"/>
<dbReference type="SignaLink" id="Q13610"/>
<dbReference type="BioGRID-ORCS" id="11137">
    <property type="hits" value="632 hits in 1170 CRISPR screens"/>
</dbReference>
<dbReference type="CD-CODE" id="91857CE7">
    <property type="entry name" value="Nucleolus"/>
</dbReference>
<dbReference type="CD-CODE" id="DEE660B4">
    <property type="entry name" value="Stress granule"/>
</dbReference>
<dbReference type="ChiTaRS" id="PWP1">
    <property type="organism name" value="human"/>
</dbReference>
<dbReference type="GeneWiki" id="PWP1"/>
<dbReference type="GenomeRNAi" id="11137"/>
<dbReference type="Pharos" id="Q13610">
    <property type="development level" value="Tbio"/>
</dbReference>
<dbReference type="PRO" id="PR:Q13610"/>
<dbReference type="Proteomes" id="UP000005640">
    <property type="component" value="Chromosome 12"/>
</dbReference>
<dbReference type="RNAct" id="Q13610">
    <property type="molecule type" value="protein"/>
</dbReference>
<dbReference type="Bgee" id="ENSG00000136045">
    <property type="expression patterns" value="Expressed in secondary oocyte and 219 other cell types or tissues"/>
</dbReference>
<dbReference type="ExpressionAtlas" id="Q13610">
    <property type="expression patterns" value="baseline and differential"/>
</dbReference>
<dbReference type="GO" id="GO:0005694">
    <property type="term" value="C:chromosome"/>
    <property type="evidence" value="ECO:0007669"/>
    <property type="project" value="UniProtKB-SubCell"/>
</dbReference>
<dbReference type="GO" id="GO:0005794">
    <property type="term" value="C:Golgi apparatus"/>
    <property type="evidence" value="ECO:0000314"/>
    <property type="project" value="HPA"/>
</dbReference>
<dbReference type="GO" id="GO:0005730">
    <property type="term" value="C:nucleolus"/>
    <property type="evidence" value="ECO:0000314"/>
    <property type="project" value="HPA"/>
</dbReference>
<dbReference type="GO" id="GO:0005634">
    <property type="term" value="C:nucleus"/>
    <property type="evidence" value="ECO:0000318"/>
    <property type="project" value="GO_Central"/>
</dbReference>
<dbReference type="GO" id="GO:0140713">
    <property type="term" value="F:histone chaperone activity"/>
    <property type="evidence" value="ECO:0007669"/>
    <property type="project" value="Ensembl"/>
</dbReference>
<dbReference type="GO" id="GO:1990889">
    <property type="term" value="F:histone H4K20me3 reader activity"/>
    <property type="evidence" value="ECO:0007669"/>
    <property type="project" value="Ensembl"/>
</dbReference>
<dbReference type="GO" id="GO:0006351">
    <property type="term" value="P:DNA-templated transcription"/>
    <property type="evidence" value="ECO:0000304"/>
    <property type="project" value="ProtInc"/>
</dbReference>
<dbReference type="GO" id="GO:0045892">
    <property type="term" value="P:negative regulation of DNA-templated transcription"/>
    <property type="evidence" value="ECO:0007669"/>
    <property type="project" value="Ensembl"/>
</dbReference>
<dbReference type="GO" id="GO:2000738">
    <property type="term" value="P:positive regulation of stem cell differentiation"/>
    <property type="evidence" value="ECO:0007669"/>
    <property type="project" value="Ensembl"/>
</dbReference>
<dbReference type="GO" id="GO:1901838">
    <property type="term" value="P:positive regulation of transcription of nucleolar large rRNA by RNA polymerase I"/>
    <property type="evidence" value="ECO:0000314"/>
    <property type="project" value="FlyBase"/>
</dbReference>
<dbReference type="GO" id="GO:0006364">
    <property type="term" value="P:rRNA processing"/>
    <property type="evidence" value="ECO:0007669"/>
    <property type="project" value="InterPro"/>
</dbReference>
<dbReference type="FunFam" id="2.130.10.10:FF:000241">
    <property type="entry name" value="periodic tryptophan protein 1 homolog"/>
    <property type="match status" value="1"/>
</dbReference>
<dbReference type="Gene3D" id="2.130.10.10">
    <property type="entry name" value="YVTN repeat-like/Quinoprotein amine dehydrogenase"/>
    <property type="match status" value="1"/>
</dbReference>
<dbReference type="InterPro" id="IPR020472">
    <property type="entry name" value="G-protein_beta_WD-40_rep"/>
</dbReference>
<dbReference type="InterPro" id="IPR044285">
    <property type="entry name" value="PWP1"/>
</dbReference>
<dbReference type="InterPro" id="IPR015943">
    <property type="entry name" value="WD40/YVTN_repeat-like_dom_sf"/>
</dbReference>
<dbReference type="InterPro" id="IPR019775">
    <property type="entry name" value="WD40_repeat_CS"/>
</dbReference>
<dbReference type="InterPro" id="IPR036322">
    <property type="entry name" value="WD40_repeat_dom_sf"/>
</dbReference>
<dbReference type="InterPro" id="IPR001680">
    <property type="entry name" value="WD40_rpt"/>
</dbReference>
<dbReference type="PANTHER" id="PTHR14091">
    <property type="entry name" value="PERIODIC TRYPTOPHAN PROTEIN 1"/>
    <property type="match status" value="1"/>
</dbReference>
<dbReference type="PANTHER" id="PTHR14091:SF0">
    <property type="entry name" value="PERIODIC TRYPTOPHAN PROTEIN 1 HOMOLOG"/>
    <property type="match status" value="1"/>
</dbReference>
<dbReference type="Pfam" id="PF00400">
    <property type="entry name" value="WD40"/>
    <property type="match status" value="3"/>
</dbReference>
<dbReference type="PRINTS" id="PR00320">
    <property type="entry name" value="GPROTEINBRPT"/>
</dbReference>
<dbReference type="SMART" id="SM00320">
    <property type="entry name" value="WD40"/>
    <property type="match status" value="4"/>
</dbReference>
<dbReference type="SUPFAM" id="SSF50978">
    <property type="entry name" value="WD40 repeat-like"/>
    <property type="match status" value="1"/>
</dbReference>
<dbReference type="PROSITE" id="PS00678">
    <property type="entry name" value="WD_REPEATS_1"/>
    <property type="match status" value="2"/>
</dbReference>
<dbReference type="PROSITE" id="PS50082">
    <property type="entry name" value="WD_REPEATS_2"/>
    <property type="match status" value="3"/>
</dbReference>
<dbReference type="PROSITE" id="PS50294">
    <property type="entry name" value="WD_REPEATS_REGION"/>
    <property type="match status" value="1"/>
</dbReference>
<keyword id="KW-0025">Alternative splicing</keyword>
<keyword id="KW-0158">Chromosome</keyword>
<keyword id="KW-0539">Nucleus</keyword>
<keyword id="KW-0597">Phosphoprotein</keyword>
<keyword id="KW-1267">Proteomics identification</keyword>
<keyword id="KW-1185">Reference proteome</keyword>
<keyword id="KW-0677">Repeat</keyword>
<keyword id="KW-0690">Ribosome biogenesis</keyword>
<keyword id="KW-0804">Transcription</keyword>
<keyword id="KW-0805">Transcription regulation</keyword>
<keyword id="KW-0853">WD repeat</keyword>
<evidence type="ECO:0000250" key="1">
    <source>
        <dbReference type="UniProtKB" id="Q99LL5"/>
    </source>
</evidence>
<evidence type="ECO:0000256" key="2">
    <source>
        <dbReference type="SAM" id="MobiDB-lite"/>
    </source>
</evidence>
<evidence type="ECO:0000269" key="3">
    <source>
    </source>
</evidence>
<evidence type="ECO:0000269" key="4">
    <source>
    </source>
</evidence>
<evidence type="ECO:0000303" key="5">
    <source>
    </source>
</evidence>
<evidence type="ECO:0000305" key="6"/>
<evidence type="ECO:0000312" key="7">
    <source>
        <dbReference type="HGNC" id="HGNC:17015"/>
    </source>
</evidence>
<evidence type="ECO:0007744" key="8">
    <source>
    </source>
</evidence>
<evidence type="ECO:0007744" key="9">
    <source>
    </source>
</evidence>
<evidence type="ECO:0007744" key="10">
    <source>
    </source>
</evidence>
<evidence type="ECO:0007744" key="11">
    <source>
    </source>
</evidence>
<evidence type="ECO:0007744" key="12">
    <source>
    </source>
</evidence>
<evidence type="ECO:0007744" key="13">
    <source>
    </source>
</evidence>
<evidence type="ECO:0007744" key="14">
    <source>
    </source>
</evidence>
<evidence type="ECO:0007744" key="15">
    <source>
    </source>
</evidence>
<gene>
    <name type="primary">PWP1</name>
</gene>
<feature type="chain" id="PRO_0000051171" description="Periodic tryptophan protein 1 homolog">
    <location>
        <begin position="1"/>
        <end position="501"/>
    </location>
</feature>
<feature type="repeat" description="WD 1">
    <location>
        <begin position="116"/>
        <end position="171"/>
    </location>
</feature>
<feature type="repeat" description="WD 2">
    <location>
        <begin position="177"/>
        <end position="222"/>
    </location>
</feature>
<feature type="repeat" description="WD 3">
    <location>
        <begin position="247"/>
        <end position="286"/>
    </location>
</feature>
<feature type="repeat" description="WD 4">
    <location>
        <begin position="290"/>
        <end position="329"/>
    </location>
</feature>
<feature type="repeat" description="WD 5">
    <location>
        <begin position="334"/>
        <end position="372"/>
    </location>
</feature>
<feature type="repeat" description="WD 6">
    <location>
        <begin position="376"/>
        <end position="415"/>
    </location>
</feature>
<feature type="repeat" description="WD 7">
    <location>
        <begin position="421"/>
        <end position="460"/>
    </location>
</feature>
<feature type="region of interest" description="Disordered" evidence="2">
    <location>
        <begin position="38"/>
        <end position="89"/>
    </location>
</feature>
<feature type="compositionally biased region" description="Acidic residues" evidence="2">
    <location>
        <begin position="77"/>
        <end position="89"/>
    </location>
</feature>
<feature type="modified residue" description="Phosphothreonine" evidence="14">
    <location>
        <position position="21"/>
    </location>
</feature>
<feature type="modified residue" description="Phosphoserine" evidence="8 9 10 11 12 13 14 15">
    <location>
        <position position="50"/>
    </location>
</feature>
<feature type="modified residue" description="Phosphothreonine" evidence="11">
    <location>
        <position position="55"/>
    </location>
</feature>
<feature type="modified residue" description="Phosphoserine" evidence="10 11 12 14">
    <location>
        <position position="57"/>
    </location>
</feature>
<feature type="modified residue" description="Phosphoserine" evidence="10 11">
    <location>
        <position position="59"/>
    </location>
</feature>
<feature type="modified residue" description="Phosphothreonine" evidence="12">
    <location>
        <position position="86"/>
    </location>
</feature>
<feature type="modified residue" description="Phosphoserine" evidence="14">
    <location>
        <position position="485"/>
    </location>
</feature>
<feature type="modified residue" description="Phosphoserine" evidence="1">
    <location>
        <position position="494"/>
    </location>
</feature>
<feature type="splice variant" id="VSP_056168" description="In isoform 2." evidence="5">
    <original>EQYEREDFLIKP</original>
    <variation>SMTFFSSHLGTI</variation>
    <location>
        <begin position="136"/>
        <end position="147"/>
    </location>
</feature>
<feature type="splice variant" id="VSP_056169" description="In isoform 2." evidence="5">
    <location>
        <begin position="148"/>
        <end position="501"/>
    </location>
</feature>
<feature type="sequence variant" id="VAR_033808" description="In dbSNP:rs11547907.">
    <original>L</original>
    <variation>F</variation>
    <location>
        <position position="288"/>
    </location>
</feature>